<sequence>MSAKSKQYFNIFVFIISLIFFDQLSKYLVAKYVKLGSIYFSFFDDFFRIIHVRNTGILFSMGSNIHYSLKKIFFLAMPIFILIFVFYLSLKERNCIARISLLLIFSGGVGNVIDRLFRPSGVVDFLDLKFYGIFGLDRWPTFNFADSYVVIGMILFLVYDFFIKRKVLNK</sequence>
<comment type="function">
    <text evidence="1">This protein specifically catalyzes the removal of signal peptides from prolipoproteins.</text>
</comment>
<comment type="catalytic activity">
    <reaction evidence="1">
        <text>Release of signal peptides from bacterial membrane prolipoproteins. Hydrolyzes -Xaa-Yaa-Zaa-|-(S,diacylglyceryl)Cys-, in which Xaa is hydrophobic (preferably Leu), and Yaa (Ala or Ser) and Zaa (Gly or Ala) have small, neutral side chains.</text>
        <dbReference type="EC" id="3.4.23.36"/>
    </reaction>
</comment>
<comment type="pathway">
    <text evidence="1">Protein modification; lipoprotein biosynthesis (signal peptide cleavage).</text>
</comment>
<comment type="subcellular location">
    <subcellularLocation>
        <location evidence="1">Cell inner membrane</location>
        <topology evidence="1">Multi-pass membrane protein</topology>
    </subcellularLocation>
</comment>
<comment type="similarity">
    <text evidence="1">Belongs to the peptidase A8 family.</text>
</comment>
<evidence type="ECO:0000255" key="1">
    <source>
        <dbReference type="HAMAP-Rule" id="MF_00161"/>
    </source>
</evidence>
<keyword id="KW-0064">Aspartyl protease</keyword>
<keyword id="KW-0997">Cell inner membrane</keyword>
<keyword id="KW-1003">Cell membrane</keyword>
<keyword id="KW-0378">Hydrolase</keyword>
<keyword id="KW-0472">Membrane</keyword>
<keyword id="KW-0645">Protease</keyword>
<keyword id="KW-0812">Transmembrane</keyword>
<keyword id="KW-1133">Transmembrane helix</keyword>
<reference key="1">
    <citation type="journal article" date="2011" name="J. Bacteriol.">
        <title>Whole-genome sequences of thirteen isolates of Borrelia burgdorferi.</title>
        <authorList>
            <person name="Schutzer S.E."/>
            <person name="Fraser-Liggett C.M."/>
            <person name="Casjens S.R."/>
            <person name="Qiu W.G."/>
            <person name="Dunn J.J."/>
            <person name="Mongodin E.F."/>
            <person name="Luft B.J."/>
        </authorList>
    </citation>
    <scope>NUCLEOTIDE SEQUENCE [LARGE SCALE GENOMIC DNA]</scope>
    <source>
        <strain>ZS7</strain>
    </source>
</reference>
<accession>B7J235</accession>
<feature type="chain" id="PRO_1000190795" description="Lipoprotein signal peptidase">
    <location>
        <begin position="1"/>
        <end position="170"/>
    </location>
</feature>
<feature type="transmembrane region" description="Helical" evidence="1">
    <location>
        <begin position="9"/>
        <end position="29"/>
    </location>
</feature>
<feature type="transmembrane region" description="Helical" evidence="1">
    <location>
        <begin position="72"/>
        <end position="92"/>
    </location>
</feature>
<feature type="transmembrane region" description="Helical" evidence="1">
    <location>
        <begin position="94"/>
        <end position="114"/>
    </location>
</feature>
<feature type="transmembrane region" description="Helical" evidence="1">
    <location>
        <begin position="143"/>
        <end position="163"/>
    </location>
</feature>
<feature type="active site" evidence="1">
    <location>
        <position position="124"/>
    </location>
</feature>
<feature type="active site" evidence="1">
    <location>
        <position position="146"/>
    </location>
</feature>
<dbReference type="EC" id="3.4.23.36" evidence="1"/>
<dbReference type="EMBL" id="CP001205">
    <property type="protein sequence ID" value="ACK74955.1"/>
    <property type="molecule type" value="Genomic_DNA"/>
</dbReference>
<dbReference type="RefSeq" id="WP_002655974.1">
    <property type="nucleotide sequence ID" value="NC_011728.1"/>
</dbReference>
<dbReference type="SMR" id="B7J235"/>
<dbReference type="GeneID" id="56567905"/>
<dbReference type="KEGG" id="bbz:BbuZS7_0481"/>
<dbReference type="HOGENOM" id="CLU_083252_3_1_12"/>
<dbReference type="UniPathway" id="UPA00665"/>
<dbReference type="Proteomes" id="UP000006901">
    <property type="component" value="Chromosome"/>
</dbReference>
<dbReference type="GO" id="GO:0005886">
    <property type="term" value="C:plasma membrane"/>
    <property type="evidence" value="ECO:0007669"/>
    <property type="project" value="UniProtKB-SubCell"/>
</dbReference>
<dbReference type="GO" id="GO:0004190">
    <property type="term" value="F:aspartic-type endopeptidase activity"/>
    <property type="evidence" value="ECO:0007669"/>
    <property type="project" value="UniProtKB-UniRule"/>
</dbReference>
<dbReference type="GO" id="GO:0006508">
    <property type="term" value="P:proteolysis"/>
    <property type="evidence" value="ECO:0007669"/>
    <property type="project" value="UniProtKB-KW"/>
</dbReference>
<dbReference type="HAMAP" id="MF_00161">
    <property type="entry name" value="LspA"/>
    <property type="match status" value="1"/>
</dbReference>
<dbReference type="InterPro" id="IPR001872">
    <property type="entry name" value="Peptidase_A8"/>
</dbReference>
<dbReference type="NCBIfam" id="TIGR00077">
    <property type="entry name" value="lspA"/>
    <property type="match status" value="1"/>
</dbReference>
<dbReference type="PANTHER" id="PTHR33695">
    <property type="entry name" value="LIPOPROTEIN SIGNAL PEPTIDASE"/>
    <property type="match status" value="1"/>
</dbReference>
<dbReference type="PANTHER" id="PTHR33695:SF1">
    <property type="entry name" value="LIPOPROTEIN SIGNAL PEPTIDASE"/>
    <property type="match status" value="1"/>
</dbReference>
<dbReference type="Pfam" id="PF01252">
    <property type="entry name" value="Peptidase_A8"/>
    <property type="match status" value="1"/>
</dbReference>
<dbReference type="PRINTS" id="PR00781">
    <property type="entry name" value="LIPOSIGPTASE"/>
</dbReference>
<dbReference type="PROSITE" id="PS00855">
    <property type="entry name" value="SPASE_II"/>
    <property type="match status" value="1"/>
</dbReference>
<proteinExistence type="inferred from homology"/>
<gene>
    <name evidence="1" type="primary">lspA</name>
    <name type="ordered locus">BbuZS7_0481</name>
</gene>
<organism>
    <name type="scientific">Borreliella burgdorferi (strain ZS7)</name>
    <name type="common">Borrelia burgdorferi</name>
    <dbReference type="NCBI Taxonomy" id="445985"/>
    <lineage>
        <taxon>Bacteria</taxon>
        <taxon>Pseudomonadati</taxon>
        <taxon>Spirochaetota</taxon>
        <taxon>Spirochaetia</taxon>
        <taxon>Spirochaetales</taxon>
        <taxon>Borreliaceae</taxon>
        <taxon>Borreliella</taxon>
    </lineage>
</organism>
<protein>
    <recommendedName>
        <fullName evidence="1">Lipoprotein signal peptidase</fullName>
        <ecNumber evidence="1">3.4.23.36</ecNumber>
    </recommendedName>
    <alternativeName>
        <fullName evidence="1">Prolipoprotein signal peptidase</fullName>
    </alternativeName>
    <alternativeName>
        <fullName evidence="1">Signal peptidase II</fullName>
        <shortName evidence="1">SPase II</shortName>
    </alternativeName>
</protein>
<name>LSPA_BORBZ</name>